<reference key="1">
    <citation type="journal article" date="2012" name="BMC Microbiol.">
        <title>Genome sequence of Desulfitobacterium hafniense DCB-2, a Gram-positive anaerobe capable of dehalogenation and metal reduction.</title>
        <authorList>
            <person name="Kim S.H."/>
            <person name="Harzman C."/>
            <person name="Davis J.K."/>
            <person name="Hutcheson R."/>
            <person name="Broderick J.B."/>
            <person name="Marsh T.L."/>
            <person name="Tiedje J.M."/>
        </authorList>
    </citation>
    <scope>NUCLEOTIDE SEQUENCE [LARGE SCALE GENOMIC DNA]</scope>
    <source>
        <strain>DSM 10664 / DCB-2</strain>
    </source>
</reference>
<protein>
    <recommendedName>
        <fullName evidence="1">Probable cell division protein WhiA</fullName>
    </recommendedName>
</protein>
<keyword id="KW-0131">Cell cycle</keyword>
<keyword id="KW-0132">Cell division</keyword>
<keyword id="KW-0238">DNA-binding</keyword>
<comment type="function">
    <text evidence="1">Involved in cell division and chromosome segregation.</text>
</comment>
<comment type="similarity">
    <text evidence="1">Belongs to the WhiA family.</text>
</comment>
<feature type="chain" id="PRO_0000376478" description="Probable cell division protein WhiA">
    <location>
        <begin position="1"/>
        <end position="317"/>
    </location>
</feature>
<feature type="DNA-binding region" description="H-T-H motif" evidence="1">
    <location>
        <begin position="275"/>
        <end position="308"/>
    </location>
</feature>
<evidence type="ECO:0000255" key="1">
    <source>
        <dbReference type="HAMAP-Rule" id="MF_01420"/>
    </source>
</evidence>
<organism>
    <name type="scientific">Desulfitobacterium hafniense (strain DSM 10664 / DCB-2)</name>
    <dbReference type="NCBI Taxonomy" id="272564"/>
    <lineage>
        <taxon>Bacteria</taxon>
        <taxon>Bacillati</taxon>
        <taxon>Bacillota</taxon>
        <taxon>Clostridia</taxon>
        <taxon>Eubacteriales</taxon>
        <taxon>Desulfitobacteriaceae</taxon>
        <taxon>Desulfitobacterium</taxon>
    </lineage>
</organism>
<proteinExistence type="inferred from homology"/>
<sequence>MSFSAETKDELARIEEGKRCCNLAELAALVRMDGTLQIANHSYALNVITESAPVARKVYRLAKNLLGLPVDIMVRRKLRLKKNNSYMVKIYPRTLEDLQQLGLLDEEGEILPGIPNVLVKKKCDRIAYLRGAFLAGGSINNPEGTYHLEIITNDPLHAEALSKLLNKFHLGAKVSMRKNWHVVYIKESEHIVEFLGFIGAHRALLEFENVRVLKDMRNQVNRLVNCETANLNKTVDAAVRQVENIQRVANTIGLQALPEPLREIAELRLEYPDASLKELGEMLVPKVGKSGVNHRMRKIDELAEKLEEQSKRVRKGG</sequence>
<dbReference type="EMBL" id="CP001336">
    <property type="protein sequence ID" value="ACL22715.1"/>
    <property type="molecule type" value="Genomic_DNA"/>
</dbReference>
<dbReference type="RefSeq" id="WP_015945419.1">
    <property type="nucleotide sequence ID" value="NC_011830.1"/>
</dbReference>
<dbReference type="SMR" id="B8FXW4"/>
<dbReference type="KEGG" id="dhd:Dhaf_4720"/>
<dbReference type="HOGENOM" id="CLU_053282_0_0_9"/>
<dbReference type="Proteomes" id="UP000007726">
    <property type="component" value="Chromosome"/>
</dbReference>
<dbReference type="GO" id="GO:0003677">
    <property type="term" value="F:DNA binding"/>
    <property type="evidence" value="ECO:0007669"/>
    <property type="project" value="UniProtKB-UniRule"/>
</dbReference>
<dbReference type="GO" id="GO:0051301">
    <property type="term" value="P:cell division"/>
    <property type="evidence" value="ECO:0007669"/>
    <property type="project" value="UniProtKB-UniRule"/>
</dbReference>
<dbReference type="GO" id="GO:0043937">
    <property type="term" value="P:regulation of sporulation"/>
    <property type="evidence" value="ECO:0007669"/>
    <property type="project" value="InterPro"/>
</dbReference>
<dbReference type="Gene3D" id="3.10.28.10">
    <property type="entry name" value="Homing endonucleases"/>
    <property type="match status" value="1"/>
</dbReference>
<dbReference type="HAMAP" id="MF_01420">
    <property type="entry name" value="HTH_type_WhiA"/>
    <property type="match status" value="1"/>
</dbReference>
<dbReference type="InterPro" id="IPR027434">
    <property type="entry name" value="Homing_endonucl"/>
</dbReference>
<dbReference type="InterPro" id="IPR018478">
    <property type="entry name" value="Sporu_reg_WhiA_N_dom"/>
</dbReference>
<dbReference type="InterPro" id="IPR003802">
    <property type="entry name" value="Sporulation_regulator_WhiA"/>
</dbReference>
<dbReference type="InterPro" id="IPR023054">
    <property type="entry name" value="Sporulation_regulator_WhiA_C"/>
</dbReference>
<dbReference type="InterPro" id="IPR039518">
    <property type="entry name" value="WhiA_LAGLIDADG_dom"/>
</dbReference>
<dbReference type="NCBIfam" id="TIGR00647">
    <property type="entry name" value="DNA_bind_WhiA"/>
    <property type="match status" value="1"/>
</dbReference>
<dbReference type="PANTHER" id="PTHR37307">
    <property type="entry name" value="CELL DIVISION PROTEIN WHIA-RELATED"/>
    <property type="match status" value="1"/>
</dbReference>
<dbReference type="PANTHER" id="PTHR37307:SF1">
    <property type="entry name" value="CELL DIVISION PROTEIN WHIA-RELATED"/>
    <property type="match status" value="1"/>
</dbReference>
<dbReference type="Pfam" id="PF02650">
    <property type="entry name" value="HTH_WhiA"/>
    <property type="match status" value="1"/>
</dbReference>
<dbReference type="Pfam" id="PF14527">
    <property type="entry name" value="LAGLIDADG_WhiA"/>
    <property type="match status" value="1"/>
</dbReference>
<dbReference type="Pfam" id="PF10298">
    <property type="entry name" value="WhiA_N"/>
    <property type="match status" value="1"/>
</dbReference>
<dbReference type="SUPFAM" id="SSF55608">
    <property type="entry name" value="Homing endonucleases"/>
    <property type="match status" value="1"/>
</dbReference>
<accession>B8FXW4</accession>
<gene>
    <name evidence="1" type="primary">whiA</name>
    <name type="ordered locus">Dhaf_4720</name>
</gene>
<name>WHIA_DESHD</name>